<name>IL2RA_BOVIN</name>
<protein>
    <recommendedName>
        <fullName>Interleukin-2 receptor subunit alpha</fullName>
        <shortName>IL-2 receptor subunit alpha</shortName>
        <shortName>IL-2-RA</shortName>
        <shortName>IL-2R subunit alpha</shortName>
        <shortName>IL2-RA</shortName>
    </recommendedName>
    <alternativeName>
        <fullName>TAC antigen</fullName>
    </alternativeName>
    <alternativeName>
        <fullName>p55</fullName>
    </alternativeName>
    <cdAntigenName>CD25</cdAntigenName>
</protein>
<sequence length="275" mass="31239">MEPSLLMWRFFVFIVVPGCVTEACHDDPPSLRNAMFKVFRYEVGTMINCDCKTGFRRVSAVMRCVGDSSHSAWENRCFCNSTSPAKNQVKQVTPAPEEHREKKHTDAQNQTQPPEEADLPGHCEEPPPWEHEREPLKRVYHFTLGQTVHYQCAQGFRALQTSPAESTCMMINGELRWTRPRLKCIREGEHGQASDDAEPQESTEAPPGSGTFLPTRMAGTTNFQKPTDEIATLDTFIFTTEYQIAVAGCTLLLASILLLSCLTWQRKWKKNRRTI</sequence>
<feature type="signal peptide">
    <location>
        <begin position="1"/>
        <end position="21"/>
    </location>
</feature>
<feature type="chain" id="PRO_0000011021" description="Interleukin-2 receptor subunit alpha">
    <location>
        <begin position="22"/>
        <end position="275"/>
    </location>
</feature>
<feature type="topological domain" description="Extracellular" evidence="2">
    <location>
        <begin position="22"/>
        <end position="243"/>
    </location>
</feature>
<feature type="transmembrane region" description="Helical" evidence="2">
    <location>
        <begin position="244"/>
        <end position="262"/>
    </location>
</feature>
<feature type="topological domain" description="Cytoplasmic" evidence="2">
    <location>
        <begin position="263"/>
        <end position="275"/>
    </location>
</feature>
<feature type="domain" description="Sushi 1" evidence="3">
    <location>
        <begin position="22"/>
        <end position="81"/>
    </location>
</feature>
<feature type="domain" description="Sushi 2" evidence="3">
    <location>
        <begin position="121"/>
        <end position="186"/>
    </location>
</feature>
<feature type="region of interest" description="Disordered" evidence="4">
    <location>
        <begin position="88"/>
        <end position="130"/>
    </location>
</feature>
<feature type="region of interest" description="Disordered" evidence="4">
    <location>
        <begin position="188"/>
        <end position="221"/>
    </location>
</feature>
<feature type="compositionally biased region" description="Basic and acidic residues" evidence="4">
    <location>
        <begin position="96"/>
        <end position="106"/>
    </location>
</feature>
<feature type="compositionally biased region" description="Basic and acidic residues" evidence="4">
    <location>
        <begin position="119"/>
        <end position="130"/>
    </location>
</feature>
<feature type="glycosylation site" description="N-linked (GlcNAc...) asparagine" evidence="2">
    <location>
        <position position="80"/>
    </location>
</feature>
<feature type="glycosylation site" description="N-linked (GlcNAc...) asparagine" evidence="2">
    <location>
        <position position="109"/>
    </location>
</feature>
<feature type="disulfide bond" evidence="3">
    <location>
        <begin position="24"/>
        <end position="64"/>
    </location>
</feature>
<feature type="disulfide bond" evidence="3">
    <location>
        <begin position="49"/>
        <end position="77"/>
    </location>
</feature>
<feature type="disulfide bond" evidence="3">
    <location>
        <begin position="51"/>
        <end position="79"/>
    </location>
</feature>
<feature type="disulfide bond" evidence="3">
    <location>
        <begin position="123"/>
        <end position="168"/>
    </location>
</feature>
<feature type="disulfide bond" evidence="3">
    <location>
        <begin position="152"/>
        <end position="184"/>
    </location>
</feature>
<keyword id="KW-1015">Disulfide bond</keyword>
<keyword id="KW-0325">Glycoprotein</keyword>
<keyword id="KW-0391">Immunity</keyword>
<keyword id="KW-0472">Membrane</keyword>
<keyword id="KW-0675">Receptor</keyword>
<keyword id="KW-1185">Reference proteome</keyword>
<keyword id="KW-0677">Repeat</keyword>
<keyword id="KW-0732">Signal</keyword>
<keyword id="KW-0768">Sushi</keyword>
<keyword id="KW-0812">Transmembrane</keyword>
<keyword id="KW-1133">Transmembrane helix</keyword>
<dbReference type="EMBL" id="M20818">
    <property type="protein sequence ID" value="AAA51414.1"/>
    <property type="molecule type" value="mRNA"/>
</dbReference>
<dbReference type="EMBL" id="U24226">
    <property type="protein sequence ID" value="AAC48487.1"/>
    <property type="molecule type" value="Genomic_DNA"/>
</dbReference>
<dbReference type="PIR" id="S07442">
    <property type="entry name" value="S07442"/>
</dbReference>
<dbReference type="RefSeq" id="NP_776783.1">
    <property type="nucleotide sequence ID" value="NM_174358.2"/>
</dbReference>
<dbReference type="SMR" id="P12342"/>
<dbReference type="FunCoup" id="P12342">
    <property type="interactions" value="360"/>
</dbReference>
<dbReference type="STRING" id="9913.ENSBTAP00000051522"/>
<dbReference type="GlyCosmos" id="P12342">
    <property type="glycosylation" value="2 sites, No reported glycans"/>
</dbReference>
<dbReference type="GlyGen" id="P12342">
    <property type="glycosylation" value="2 sites"/>
</dbReference>
<dbReference type="PaxDb" id="9913-ENSBTAP00000027834"/>
<dbReference type="GeneID" id="281861"/>
<dbReference type="KEGG" id="bta:281861"/>
<dbReference type="CTD" id="3559"/>
<dbReference type="eggNOG" id="ENOG502SUAG">
    <property type="taxonomic scope" value="Eukaryota"/>
</dbReference>
<dbReference type="InParanoid" id="P12342"/>
<dbReference type="OrthoDB" id="9833060at2759"/>
<dbReference type="Proteomes" id="UP000009136">
    <property type="component" value="Unplaced"/>
</dbReference>
<dbReference type="GO" id="GO:0016020">
    <property type="term" value="C:membrane"/>
    <property type="evidence" value="ECO:0007669"/>
    <property type="project" value="UniProtKB-SubCell"/>
</dbReference>
<dbReference type="GO" id="GO:0019976">
    <property type="term" value="F:interleukin-2 binding"/>
    <property type="evidence" value="ECO:0000318"/>
    <property type="project" value="GO_Central"/>
</dbReference>
<dbReference type="GO" id="GO:0004911">
    <property type="term" value="F:interleukin-2 receptor activity"/>
    <property type="evidence" value="ECO:0007669"/>
    <property type="project" value="InterPro"/>
</dbReference>
<dbReference type="GO" id="GO:0002376">
    <property type="term" value="P:immune system process"/>
    <property type="evidence" value="ECO:0007669"/>
    <property type="project" value="UniProtKB-KW"/>
</dbReference>
<dbReference type="GO" id="GO:0006954">
    <property type="term" value="P:inflammatory response"/>
    <property type="evidence" value="ECO:0000318"/>
    <property type="project" value="GO_Central"/>
</dbReference>
<dbReference type="CDD" id="cd00033">
    <property type="entry name" value="CCP"/>
    <property type="match status" value="1"/>
</dbReference>
<dbReference type="FunFam" id="2.20.28.230:FF:000002">
    <property type="entry name" value="Interleukin-2 receptor subunit alpha"/>
    <property type="match status" value="1"/>
</dbReference>
<dbReference type="Gene3D" id="2.20.28.230">
    <property type="match status" value="2"/>
</dbReference>
<dbReference type="Gene3D" id="2.10.70.10">
    <property type="entry name" value="Complement Module, domain 1"/>
    <property type="match status" value="1"/>
</dbReference>
<dbReference type="InterPro" id="IPR015486">
    <property type="entry name" value="IL-2_rcpt_alpha"/>
</dbReference>
<dbReference type="InterPro" id="IPR035976">
    <property type="entry name" value="Sushi/SCR/CCP_sf"/>
</dbReference>
<dbReference type="InterPro" id="IPR000436">
    <property type="entry name" value="Sushi_SCR_CCP_dom"/>
</dbReference>
<dbReference type="PANTHER" id="PTHR10573">
    <property type="entry name" value="INTERLEUKIN-2 RECEPTOR ALPHA CHAIN"/>
    <property type="match status" value="1"/>
</dbReference>
<dbReference type="PANTHER" id="PTHR10573:SF0">
    <property type="entry name" value="INTERLEUKIN-2 RECEPTOR SUBUNIT ALPHA"/>
    <property type="match status" value="1"/>
</dbReference>
<dbReference type="Pfam" id="PF00084">
    <property type="entry name" value="Sushi"/>
    <property type="match status" value="1"/>
</dbReference>
<dbReference type="SMART" id="SM00032">
    <property type="entry name" value="CCP"/>
    <property type="match status" value="2"/>
</dbReference>
<dbReference type="SUPFAM" id="SSF57535">
    <property type="entry name" value="Complement control module/SCR domain"/>
    <property type="match status" value="2"/>
</dbReference>
<dbReference type="PROSITE" id="PS50923">
    <property type="entry name" value="SUSHI"/>
    <property type="match status" value="2"/>
</dbReference>
<organism>
    <name type="scientific">Bos taurus</name>
    <name type="common">Bovine</name>
    <dbReference type="NCBI Taxonomy" id="9913"/>
    <lineage>
        <taxon>Eukaryota</taxon>
        <taxon>Metazoa</taxon>
        <taxon>Chordata</taxon>
        <taxon>Craniata</taxon>
        <taxon>Vertebrata</taxon>
        <taxon>Euteleostomi</taxon>
        <taxon>Mammalia</taxon>
        <taxon>Eutheria</taxon>
        <taxon>Laurasiatheria</taxon>
        <taxon>Artiodactyla</taxon>
        <taxon>Ruminantia</taxon>
        <taxon>Pecora</taxon>
        <taxon>Bovidae</taxon>
        <taxon>Bovinae</taxon>
        <taxon>Bos</taxon>
    </lineage>
</organism>
<evidence type="ECO:0000250" key="1">
    <source>
        <dbReference type="UniProtKB" id="P01589"/>
    </source>
</evidence>
<evidence type="ECO:0000255" key="2"/>
<evidence type="ECO:0000255" key="3">
    <source>
        <dbReference type="PROSITE-ProRule" id="PRU00302"/>
    </source>
</evidence>
<evidence type="ECO:0000256" key="4">
    <source>
        <dbReference type="SAM" id="MobiDB-lite"/>
    </source>
</evidence>
<reference key="1">
    <citation type="journal article" date="1988" name="Immunology">
        <title>Cloning of cDNA for the bovine IL-2 receptor (bovine Tac antigen).</title>
        <authorList>
            <person name="Weinberg A.D."/>
            <person name="Shaw J."/>
            <person name="Paetkau V."/>
            <person name="Bleackley R.C."/>
            <person name="Magnuson N.S."/>
            <person name="Reeves R."/>
            <person name="Magnuson J.A."/>
        </authorList>
    </citation>
    <scope>NUCLEOTIDE SEQUENCE [MRNA]</scope>
</reference>
<reference key="2">
    <citation type="journal article" date="1995" name="Mamm. Genome">
        <title>Cloning and chromosomal assignment of the bovine interleukin-2 receptor alpha (IL-2R alpha) gene.</title>
        <authorList>
            <person name="Yoo J."/>
            <person name="de Leon F.A."/>
            <person name="Stone R.T."/>
            <person name="Beattie C.W."/>
        </authorList>
    </citation>
    <scope>NUCLEOTIDE SEQUENCE [GENOMIC DNA] OF 1-21</scope>
</reference>
<accession>P12342</accession>
<comment type="function">
    <text evidence="1">Receptor for interleukin-2. The receptor is involved in the regulation of immune tolerance by controlling regulatory T cells (TREGs) activity. TREGs suppress the activation and expansion of autoreactive T-cells.</text>
</comment>
<comment type="subunit">
    <text>Non-covalent dimer of an alpha and a beta subunit. IL2R exists in 3 different forms: a high affinity dimer, an intermediate affinity monomer (beta subunit), and a low affinity monomer (alpha subunit). The high and intermediate affinity forms also associate with a gamma subunit.</text>
</comment>
<comment type="subcellular location">
    <subcellularLocation>
        <location>Membrane</location>
        <topology>Single-pass type I membrane protein</topology>
    </subcellularLocation>
</comment>
<proteinExistence type="evidence at transcript level"/>
<gene>
    <name type="primary">IL2RA</name>
</gene>